<organism>
    <name type="scientific">Proteus vulgaris</name>
    <dbReference type="NCBI Taxonomy" id="585"/>
    <lineage>
        <taxon>Bacteria</taxon>
        <taxon>Pseudomonadati</taxon>
        <taxon>Pseudomonadota</taxon>
        <taxon>Gammaproteobacteria</taxon>
        <taxon>Enterobacterales</taxon>
        <taxon>Morganellaceae</taxon>
        <taxon>Proteus</taxon>
    </lineage>
</organism>
<feature type="chain" id="PRO_0000130696" description="Large ribosomal subunit protein uL24">
    <location>
        <begin position="1" status="less than"/>
        <end position="18"/>
    </location>
</feature>
<feature type="non-terminal residue">
    <location>
        <position position="1"/>
    </location>
</feature>
<accession>P20032</accession>
<protein>
    <recommendedName>
        <fullName evidence="2">Large ribosomal subunit protein uL24</fullName>
    </recommendedName>
    <alternativeName>
        <fullName>50S ribosomal protein L24</fullName>
    </alternativeName>
</protein>
<proteinExistence type="inferred from homology"/>
<evidence type="ECO:0000250" key="1"/>
<evidence type="ECO:0000305" key="2"/>
<reference key="1">
    <citation type="journal article" date="1988" name="J. Mol. Biol.">
        <title>Translational regulation of the spc operon in Escherichia coli. Identification and structural analysis of the target site for S8 repressor protein.</title>
        <authorList>
            <person name="Cerretti D.P."/>
            <person name="Mattheakis L.C."/>
            <person name="Kearney K.R."/>
            <person name="Vu L."/>
            <person name="Nomura M."/>
        </authorList>
    </citation>
    <scope>NUCLEOTIDE SEQUENCE [GENOMIC DNA]</scope>
    <source>
        <strain>NO3254</strain>
    </source>
</reference>
<sequence>FEDGKKVRFFKSNKETIK</sequence>
<keyword id="KW-0687">Ribonucleoprotein</keyword>
<keyword id="KW-0689">Ribosomal protein</keyword>
<keyword id="KW-0694">RNA-binding</keyword>
<keyword id="KW-0699">rRNA-binding</keyword>
<gene>
    <name type="primary">rplX</name>
</gene>
<dbReference type="EMBL" id="M36264">
    <property type="protein sequence ID" value="AAA25661.1"/>
    <property type="molecule type" value="Genomic_DNA"/>
</dbReference>
<dbReference type="STRING" id="585.DR95_2132"/>
<dbReference type="eggNOG" id="COG0198">
    <property type="taxonomic scope" value="Bacteria"/>
</dbReference>
<dbReference type="GO" id="GO:1990904">
    <property type="term" value="C:ribonucleoprotein complex"/>
    <property type="evidence" value="ECO:0007669"/>
    <property type="project" value="UniProtKB-KW"/>
</dbReference>
<dbReference type="GO" id="GO:0005840">
    <property type="term" value="C:ribosome"/>
    <property type="evidence" value="ECO:0007669"/>
    <property type="project" value="UniProtKB-KW"/>
</dbReference>
<dbReference type="GO" id="GO:0019843">
    <property type="term" value="F:rRNA binding"/>
    <property type="evidence" value="ECO:0007669"/>
    <property type="project" value="UniProtKB-KW"/>
</dbReference>
<comment type="function">
    <text evidence="1">One of two assembly initiator proteins, it binds directly to the 5'-end of the 23S rRNA, where it nucleates assembly of the 50S subunit.</text>
</comment>
<comment type="function">
    <text evidence="1">One of the proteins that surrounds the polypeptide exit tunnel on the outside of the subunit.</text>
</comment>
<comment type="subunit">
    <text evidence="1">Part of the 50S ribosomal subunit.</text>
</comment>
<comment type="similarity">
    <text evidence="2">Belongs to the universal ribosomal protein uL24 family.</text>
</comment>
<name>RL24_PROVU</name>